<comment type="function">
    <text evidence="1">In epithelial cells, the heterodimer gE/gI is required for the cell-to-cell spread of the virus, by sorting nascent virions to cell junctions. Once the virus reaches the cell junctions, virus particles can spread to adjacent cells extremely rapidly through interactions with cellular receptors that accumulate at these junctions. Implicated in basolateral spread in polarized cells. In neuronal cells, gE/gI is essential for the anterograde spread of the infection throughout the host nervous system. Together with US9, the heterodimer gE/gI is involved in the sorting and transport of viral structural components toward axon tips (By similarity).</text>
</comment>
<comment type="subunit">
    <text evidence="1">Interacts with gI.</text>
</comment>
<comment type="subcellular location">
    <subcellularLocation>
        <location evidence="1">Virion membrane</location>
        <topology evidence="1">Single-pass type I membrane protein</topology>
    </subcellularLocation>
    <subcellularLocation>
        <location evidence="1">Host cell membrane</location>
        <topology evidence="1">Single-pass type I membrane protein</topology>
    </subcellularLocation>
    <subcellularLocation>
        <location evidence="1">Host cell junction</location>
    </subcellularLocation>
    <subcellularLocation>
        <location evidence="1">Host Golgi apparatus membrane</location>
        <topology evidence="1">Single-pass membrane protein</topology>
    </subcellularLocation>
    <subcellularLocation>
        <location evidence="1">Host endosome membrane</location>
        <topology evidence="1">Single-pass membrane protein</topology>
    </subcellularLocation>
    <text evidence="1">During virion morphogenesis, this protein probably accumulates in the endosomes and trans-Golgi where secondary envelopment occurs. It is probably transported to the cell surface from where it is endocytosed and directed to the trans-Golgi network (TGN), maybe through an interaction with PACS-1 sorting protein. The heterodimer gE/gI then redistributes to cell junctions to promote cell-cell spread later in the infection (By similarity).</text>
</comment>
<comment type="PTM">
    <text evidence="4">Phosphorylated on serines within the acidic cluster. Phosphorylation determines whether endocytosed viral gE traffics to the trans-Golgi network or recycles to the cell membrane.</text>
</comment>
<comment type="similarity">
    <text evidence="4">Belongs to the alphaherpesvirinae glycoprotein E family.</text>
</comment>
<organismHost>
    <name type="scientific">Bos taurus</name>
    <name type="common">Bovine</name>
    <dbReference type="NCBI Taxonomy" id="9913"/>
</organismHost>
<evidence type="ECO:0000250" key="1"/>
<evidence type="ECO:0000255" key="2"/>
<evidence type="ECO:0000256" key="3">
    <source>
        <dbReference type="SAM" id="MobiDB-lite"/>
    </source>
</evidence>
<evidence type="ECO:0000305" key="4"/>
<feature type="signal peptide" evidence="2">
    <location>
        <begin position="1"/>
        <end position="26"/>
    </location>
</feature>
<feature type="chain" id="PRO_0000038231" description="Envelope glycoprotein E">
    <location>
        <begin position="27"/>
        <end position="575"/>
    </location>
</feature>
<feature type="topological domain" description="Virion surface" evidence="2">
    <location>
        <begin position="27"/>
        <end position="423"/>
    </location>
</feature>
<feature type="transmembrane region" description="Helical" evidence="2">
    <location>
        <begin position="424"/>
        <end position="444"/>
    </location>
</feature>
<feature type="topological domain" description="Intravirion" evidence="2">
    <location>
        <begin position="445"/>
        <end position="575"/>
    </location>
</feature>
<feature type="region of interest" description="Interaction with gI" evidence="1">
    <location>
        <begin position="76"/>
        <end position="101"/>
    </location>
</feature>
<feature type="region of interest" description="Disordered" evidence="3">
    <location>
        <begin position="186"/>
        <end position="218"/>
    </location>
</feature>
<feature type="region of interest" description="Disordered" evidence="3">
    <location>
        <begin position="394"/>
        <end position="416"/>
    </location>
</feature>
<feature type="region of interest" description="Acidic" evidence="1">
    <location>
        <begin position="484"/>
        <end position="502"/>
    </location>
</feature>
<feature type="region of interest" description="Disordered" evidence="3">
    <location>
        <begin position="491"/>
        <end position="560"/>
    </location>
</feature>
<feature type="short sequence motif" description="Internalization motif" evidence="2">
    <location>
        <begin position="467"/>
        <end position="470"/>
    </location>
</feature>
<feature type="compositionally biased region" description="Acidic residues" evidence="3">
    <location>
        <begin position="491"/>
        <end position="503"/>
    </location>
</feature>
<feature type="glycosylation site" description="N-linked (GlcNAc...) asparagine; by host" evidence="2">
    <location>
        <position position="141"/>
    </location>
</feature>
<feature type="glycosylation site" description="N-linked (GlcNAc...) asparagine; by host" evidence="2">
    <location>
        <position position="343"/>
    </location>
</feature>
<feature type="disulfide bond" evidence="1">
    <location>
        <begin position="270"/>
        <end position="296"/>
    </location>
</feature>
<feature type="disulfide bond" evidence="1">
    <location>
        <begin position="279"/>
        <end position="288"/>
    </location>
</feature>
<feature type="disulfide bond" evidence="1">
    <location>
        <begin position="315"/>
        <end position="327"/>
    </location>
</feature>
<name>GE_BHV1S</name>
<keyword id="KW-1015">Disulfide bond</keyword>
<keyword id="KW-0325">Glycoprotein</keyword>
<keyword id="KW-1031">Host cell junction</keyword>
<keyword id="KW-1032">Host cell membrane</keyword>
<keyword id="KW-1039">Host endosome</keyword>
<keyword id="KW-1040">Host Golgi apparatus</keyword>
<keyword id="KW-1043">Host membrane</keyword>
<keyword id="KW-0472">Membrane</keyword>
<keyword id="KW-0732">Signal</keyword>
<keyword id="KW-0812">Transmembrane</keyword>
<keyword id="KW-1133">Transmembrane helix</keyword>
<keyword id="KW-0261">Viral envelope protein</keyword>
<keyword id="KW-0946">Virion</keyword>
<organism>
    <name type="scientific">Bovine herpesvirus 1.2 (strain ST)</name>
    <name type="common">BoHV-1</name>
    <name type="synonym">Infectious bovine rhinotracheitis virus</name>
    <dbReference type="NCBI Taxonomy" id="45407"/>
    <lineage>
        <taxon>Viruses</taxon>
        <taxon>Duplodnaviria</taxon>
        <taxon>Heunggongvirae</taxon>
        <taxon>Peploviricota</taxon>
        <taxon>Herviviricetes</taxon>
        <taxon>Herpesvirales</taxon>
        <taxon>Orthoherpesviridae</taxon>
        <taxon>Alphaherpesvirinae</taxon>
        <taxon>Varicellovirus</taxon>
        <taxon>Varicellovirus bovinealpha1</taxon>
    </lineage>
</organism>
<dbReference type="EMBL" id="Z23068">
    <property type="protein sequence ID" value="CAA80606.1"/>
    <property type="molecule type" value="Genomic_DNA"/>
</dbReference>
<dbReference type="PIR" id="S35786">
    <property type="entry name" value="S35786"/>
</dbReference>
<dbReference type="SMR" id="Q08101"/>
<dbReference type="GlyCosmos" id="Q08101">
    <property type="glycosylation" value="2 sites, No reported glycans"/>
</dbReference>
<dbReference type="GO" id="GO:0044175">
    <property type="term" value="C:host cell endosome membrane"/>
    <property type="evidence" value="ECO:0007669"/>
    <property type="project" value="UniProtKB-SubCell"/>
</dbReference>
<dbReference type="GO" id="GO:0044178">
    <property type="term" value="C:host cell Golgi membrane"/>
    <property type="evidence" value="ECO:0007669"/>
    <property type="project" value="UniProtKB-SubCell"/>
</dbReference>
<dbReference type="GO" id="GO:0044156">
    <property type="term" value="C:host cell junction"/>
    <property type="evidence" value="ECO:0007669"/>
    <property type="project" value="UniProtKB-SubCell"/>
</dbReference>
<dbReference type="GO" id="GO:0016020">
    <property type="term" value="C:membrane"/>
    <property type="evidence" value="ECO:0007669"/>
    <property type="project" value="UniProtKB-KW"/>
</dbReference>
<dbReference type="GO" id="GO:0019031">
    <property type="term" value="C:viral envelope"/>
    <property type="evidence" value="ECO:0007669"/>
    <property type="project" value="UniProtKB-KW"/>
</dbReference>
<dbReference type="GO" id="GO:0055036">
    <property type="term" value="C:virion membrane"/>
    <property type="evidence" value="ECO:0007669"/>
    <property type="project" value="UniProtKB-SubCell"/>
</dbReference>
<dbReference type="Gene3D" id="2.60.40.10">
    <property type="entry name" value="Immunoglobulins"/>
    <property type="match status" value="1"/>
</dbReference>
<dbReference type="InterPro" id="IPR046463">
    <property type="entry name" value="Herpes_gE_N"/>
</dbReference>
<dbReference type="InterPro" id="IPR003404">
    <property type="entry name" value="Herpes_glycopE_Fc"/>
</dbReference>
<dbReference type="InterPro" id="IPR036179">
    <property type="entry name" value="Ig-like_dom_sf"/>
</dbReference>
<dbReference type="InterPro" id="IPR013783">
    <property type="entry name" value="Ig-like_fold"/>
</dbReference>
<dbReference type="Pfam" id="PF02480">
    <property type="entry name" value="Herpes_gE"/>
    <property type="match status" value="1"/>
</dbReference>
<dbReference type="Pfam" id="PF20418">
    <property type="entry name" value="Herpes_gE_N"/>
    <property type="match status" value="1"/>
</dbReference>
<dbReference type="SUPFAM" id="SSF48726">
    <property type="entry name" value="Immunoglobulin"/>
    <property type="match status" value="1"/>
</dbReference>
<gene>
    <name type="primary">gE</name>
</gene>
<sequence>MQPTAPPRRRLLPLLLPQLLLFGLMAEAEPATETPGSASVDTVFTARAGAPVFLPGPAARPDVRAVRGWSVLAGACSPPVPEPVCLDDRECFTDVALDAACLRTARVAPLAIAELAERPDSTGDKEFVLADPHVSAQLGRNATGVLIAAAAEEDGGVYFLYDRLIGDAGDEETQLALTLQVATAGAQGAARDEEREPATGPTPGPPPHRTTTRAPPRRHGARFRVLPYHSHVYTPGDSFLLSVRLQSEFFDEAPFSASIDWYFLRTAGDCALIRIYETCIFHPEAPACLHPADAQCSFASPYRSETVYSRLYEQCRPDPAGRWPHECEGAAYAAPVAHLRPANNSVDLVFDDAPAAASGLYVFVLQYNGHVEAWDYSLVVTSDRLVRAVTDHTRPEAAAADAPEPGPPLTSEPAGAPTGPAPWLVVLVGALGLAGLVGIAALAVRVCARRASQKRTYDILNPFGPVYTSLPTNEPLDVVVPVSDDEFSLDEDSFADDDSDDDGPASNPPADAYDLAGAPEPTSGFARAPANGTRSSRSGFKVWFRDPPEDDAAPARAPAAPDYTVVAARLKSILR</sequence>
<proteinExistence type="inferred from homology"/>
<reference key="1">
    <citation type="journal article" date="1994" name="Virology">
        <title>The complete DNA sequence and the genetic organization of the short unique region (US) of the bovine herpesvirus type 1 (ST strain).</title>
        <authorList>
            <person name="Leung-Tack P."/>
            <person name="Audonnet J.F."/>
            <person name="Riviere M."/>
        </authorList>
    </citation>
    <scope>NUCLEOTIDE SEQUENCE [GENOMIC DNA]</scope>
</reference>
<protein>
    <recommendedName>
        <fullName>Envelope glycoprotein E</fullName>
        <shortName>gE</shortName>
    </recommendedName>
</protein>
<accession>Q08101</accession>